<feature type="chain" id="PRO_0000449824" description="Rab GTPase-activating protein 22">
    <location>
        <begin position="1"/>
        <end position="550"/>
    </location>
</feature>
<feature type="domain" description="Rab-GAP TBC" evidence="1">
    <location>
        <begin position="126"/>
        <end position="460"/>
    </location>
</feature>
<feature type="region of interest" description="Disordered" evidence="2">
    <location>
        <begin position="1"/>
        <end position="49"/>
    </location>
</feature>
<feature type="compositionally biased region" description="Low complexity" evidence="2">
    <location>
        <begin position="7"/>
        <end position="49"/>
    </location>
</feature>
<organism evidence="7">
    <name type="scientific">Arabidopsis thaliana</name>
    <name type="common">Mouse-ear cress</name>
    <dbReference type="NCBI Taxonomy" id="3702"/>
    <lineage>
        <taxon>Eukaryota</taxon>
        <taxon>Viridiplantae</taxon>
        <taxon>Streptophyta</taxon>
        <taxon>Embryophyta</taxon>
        <taxon>Tracheophyta</taxon>
        <taxon>Spermatophyta</taxon>
        <taxon>Magnoliopsida</taxon>
        <taxon>eudicotyledons</taxon>
        <taxon>Gunneridae</taxon>
        <taxon>Pentapetalae</taxon>
        <taxon>rosids</taxon>
        <taxon>malvids</taxon>
        <taxon>Brassicales</taxon>
        <taxon>Brassicaceae</taxon>
        <taxon>Camelineae</taxon>
        <taxon>Arabidopsis</taxon>
    </lineage>
</organism>
<gene>
    <name evidence="4" type="primary">RABGAP22</name>
    <name evidence="6" type="ordered locus">At5g53570</name>
    <name evidence="8" type="ORF">MNC6.11</name>
</gene>
<comment type="function">
    <text evidence="3">Involved in defense response against fungal and bacterial pathogens (PubMed:24505423). Acts as a negative regulator of jasmonate (JA) responses during infection by the soil-born fungal pathogen Verticillium longisporum (PubMed:24505423). Involved in abscisic acid-dependent stomata closure in response to infection by V.longisporum and Pseudomonas syringae (PubMed:24505423). May be a downstream component of brassinosteroid-mediated signaling (PubMed:24505423).</text>
</comment>
<comment type="subunit">
    <text evidence="3">Interacts with AGT1 in peroxisome under biotic stress conditions.</text>
</comment>
<comment type="subcellular location">
    <subcellularLocation>
        <location evidence="3">Nucleus</location>
    </subcellularLocation>
    <subcellularLocation>
        <location evidence="3">Peroxisome</location>
    </subcellularLocation>
    <text evidence="3">Localizes to peroxisome under biotic stress conditions.</text>
</comment>
<comment type="tissue specificity">
    <text evidence="3">Expressed in root meristems, vascular tissues, guard cells, trichomes, styles and receptacles.</text>
</comment>
<comment type="induction">
    <text evidence="3">Induced by infection with the soil-born fungal pathogen Verticillium longisporum.</text>
</comment>
<comment type="disruption phenotype">
    <text evidence="3">No visible phenotype under normal growth conditions, but mutant plants exhibit increased susceptibility to the soil-born fungal pathogen Verticillium longisporum.</text>
</comment>
<comment type="sequence caution" evidence="5">
    <conflict type="erroneous gene model prediction">
        <sequence resource="EMBL-CDS" id="BAB09733"/>
    </conflict>
</comment>
<sequence length="550" mass="61916">MKALRRSYTSTSSGNSSSSSSLPSSSSSSLPSSSSSSPPSSNSNSYSNSNSSSSSSSWIHLRSVLFVANLSSPSSVTSSDRRRKSPWSRRKRKWALTPHQWRSLFTPEGKLRDGGVGFLKKVRSRGVDPSIRAEVWLFLLGVYDLNSTSEEREAVKTQKRKEYEKLQRRCQMLLKCGNGSTDNLEELPSDEANSQCVRFVDDYKITGPMTSQDVVSALNTDSSDTDSCEDNEDVLLLSSFAHSDEKKPEEDNSNNNSEENSSLLVAAASEVQVEVAVHEDFSTWQRIIRLDALRADSEWANYSPYSTAITESKARRLAESVGLKDYDHLESCRLYHAARLVAILEAYAMYDPEIGYCQGMSDLLSPILAVISEDHEAFWCFVGFMKKARHNFRLDEAGIQRQLSIVSKIIKNKDSQLYKHLENLQAEDCSFVYRMVLVMFRRELSFEQTLCLWEVMWADQAAIRAGVGKSPWSRIRQQAPPTDDLLLYAIAALVLRRKLIIQKYSSMDEIVEECNSMAGQLNVWKLLDDAHHLVVTLHDKIETLSQSQSI</sequence>
<proteinExistence type="evidence at protein level"/>
<name>GAP22_ARATH</name>
<accession>Q94BY9</accession>
<accession>Q56WX5</accession>
<accession>Q9FJC7</accession>
<reference key="1">
    <citation type="journal article" date="1998" name="DNA Res.">
        <title>Structural analysis of Arabidopsis thaliana chromosome 5. VII. Sequence features of the regions of 1,013,767 bp covered by sixteen physically assigned P1 and TAC clones.</title>
        <authorList>
            <person name="Nakamura Y."/>
            <person name="Sato S."/>
            <person name="Asamizu E."/>
            <person name="Kaneko T."/>
            <person name="Kotani H."/>
            <person name="Miyajima N."/>
            <person name="Tabata S."/>
        </authorList>
    </citation>
    <scope>NUCLEOTIDE SEQUENCE [LARGE SCALE GENOMIC DNA]</scope>
    <source>
        <strain>cv. Columbia</strain>
    </source>
</reference>
<reference key="2">
    <citation type="journal article" date="2017" name="Plant J.">
        <title>Araport11: a complete reannotation of the Arabidopsis thaliana reference genome.</title>
        <authorList>
            <person name="Cheng C.Y."/>
            <person name="Krishnakumar V."/>
            <person name="Chan A.P."/>
            <person name="Thibaud-Nissen F."/>
            <person name="Schobel S."/>
            <person name="Town C.D."/>
        </authorList>
    </citation>
    <scope>GENOME REANNOTATION</scope>
    <source>
        <strain>cv. Columbia</strain>
    </source>
</reference>
<reference key="3">
    <citation type="journal article" date="2003" name="Science">
        <title>Empirical analysis of transcriptional activity in the Arabidopsis genome.</title>
        <authorList>
            <person name="Yamada K."/>
            <person name="Lim J."/>
            <person name="Dale J.M."/>
            <person name="Chen H."/>
            <person name="Shinn P."/>
            <person name="Palm C.J."/>
            <person name="Southwick A.M."/>
            <person name="Wu H.C."/>
            <person name="Kim C.J."/>
            <person name="Nguyen M."/>
            <person name="Pham P.K."/>
            <person name="Cheuk R.F."/>
            <person name="Karlin-Newmann G."/>
            <person name="Liu S.X."/>
            <person name="Lam B."/>
            <person name="Sakano H."/>
            <person name="Wu T."/>
            <person name="Yu G."/>
            <person name="Miranda M."/>
            <person name="Quach H.L."/>
            <person name="Tripp M."/>
            <person name="Chang C.H."/>
            <person name="Lee J.M."/>
            <person name="Toriumi M.J."/>
            <person name="Chan M.M."/>
            <person name="Tang C.C."/>
            <person name="Onodera C.S."/>
            <person name="Deng J.M."/>
            <person name="Akiyama K."/>
            <person name="Ansari Y."/>
            <person name="Arakawa T."/>
            <person name="Banh J."/>
            <person name="Banno F."/>
            <person name="Bowser L."/>
            <person name="Brooks S.Y."/>
            <person name="Carninci P."/>
            <person name="Chao Q."/>
            <person name="Choy N."/>
            <person name="Enju A."/>
            <person name="Goldsmith A.D."/>
            <person name="Gurjal M."/>
            <person name="Hansen N.F."/>
            <person name="Hayashizaki Y."/>
            <person name="Johnson-Hopson C."/>
            <person name="Hsuan V.W."/>
            <person name="Iida K."/>
            <person name="Karnes M."/>
            <person name="Khan S."/>
            <person name="Koesema E."/>
            <person name="Ishida J."/>
            <person name="Jiang P.X."/>
            <person name="Jones T."/>
            <person name="Kawai J."/>
            <person name="Kamiya A."/>
            <person name="Meyers C."/>
            <person name="Nakajima M."/>
            <person name="Narusaka M."/>
            <person name="Seki M."/>
            <person name="Sakurai T."/>
            <person name="Satou M."/>
            <person name="Tamse R."/>
            <person name="Vaysberg M."/>
            <person name="Wallender E.K."/>
            <person name="Wong C."/>
            <person name="Yamamura Y."/>
            <person name="Yuan S."/>
            <person name="Shinozaki K."/>
            <person name="Davis R.W."/>
            <person name="Theologis A."/>
            <person name="Ecker J.R."/>
        </authorList>
    </citation>
    <scope>NUCLEOTIDE SEQUENCE [LARGE SCALE MRNA]</scope>
    <source>
        <strain>cv. Columbia</strain>
    </source>
</reference>
<reference key="4">
    <citation type="submission" date="2005-03" db="EMBL/GenBank/DDBJ databases">
        <title>Large-scale analysis of RIKEN Arabidopsis full-length (RAFL) cDNAs.</title>
        <authorList>
            <person name="Totoki Y."/>
            <person name="Seki M."/>
            <person name="Ishida J."/>
            <person name="Nakajima M."/>
            <person name="Enju A."/>
            <person name="Kamiya A."/>
            <person name="Narusaka M."/>
            <person name="Shin-i T."/>
            <person name="Nakagawa M."/>
            <person name="Sakamoto N."/>
            <person name="Oishi K."/>
            <person name="Kohara Y."/>
            <person name="Kobayashi M."/>
            <person name="Toyoda A."/>
            <person name="Sakaki Y."/>
            <person name="Sakurai T."/>
            <person name="Iida K."/>
            <person name="Akiyama K."/>
            <person name="Satou M."/>
            <person name="Toyoda T."/>
            <person name="Konagaya A."/>
            <person name="Carninci P."/>
            <person name="Kawai J."/>
            <person name="Hayashizaki Y."/>
            <person name="Shinozaki K."/>
        </authorList>
    </citation>
    <scope>NUCLEOTIDE SEQUENCE [LARGE SCALE MRNA] OF 237-550</scope>
    <source>
        <strain>cv. Columbia</strain>
    </source>
</reference>
<reference key="5">
    <citation type="journal article" date="2006" name="Physiol. Genomics">
        <title>Comparative and evolutionary analysis of genes encoding small GTPases and their activating proteins in eukaryotic genomes.</title>
        <authorList>
            <person name="Jiang S.Y."/>
            <person name="Ramachandran S."/>
        </authorList>
    </citation>
    <scope>GENE FAMILY</scope>
    <scope>NOMENCLATURE</scope>
</reference>
<reference key="6">
    <citation type="journal article" date="2014" name="PLoS ONE">
        <title>RabGAP22 is required for defense to the vascular pathogen Verticillium longisporum and contributes to stomata immunity.</title>
        <authorList>
            <person name="Roos J."/>
            <person name="Bejai S."/>
            <person name="Oide S."/>
            <person name="Dixelius C."/>
        </authorList>
    </citation>
    <scope>FUNCTION</scope>
    <scope>INTERACTION WITH AGT1</scope>
    <scope>SUBCELLULAR LOCATION</scope>
    <scope>TISSUE SPECIFICITY</scope>
    <scope>INDUCTION</scope>
    <scope>DISRUPTION PHENOTYPE</scope>
</reference>
<dbReference type="EMBL" id="AB015476">
    <property type="protein sequence ID" value="BAB09733.1"/>
    <property type="status" value="ALT_SEQ"/>
    <property type="molecule type" value="Genomic_DNA"/>
</dbReference>
<dbReference type="EMBL" id="CP002688">
    <property type="protein sequence ID" value="AED96378.1"/>
    <property type="molecule type" value="Genomic_DNA"/>
</dbReference>
<dbReference type="EMBL" id="AY039546">
    <property type="protein sequence ID" value="AAK62601.1"/>
    <property type="molecule type" value="mRNA"/>
</dbReference>
<dbReference type="EMBL" id="AY102156">
    <property type="protein sequence ID" value="AAM26723.1"/>
    <property type="molecule type" value="mRNA"/>
</dbReference>
<dbReference type="EMBL" id="AK221904">
    <property type="protein sequence ID" value="BAD94281.1"/>
    <property type="molecule type" value="mRNA"/>
</dbReference>
<dbReference type="RefSeq" id="NP_200169.1">
    <property type="nucleotide sequence ID" value="NM_124737.3"/>
</dbReference>
<dbReference type="SMR" id="Q94BY9"/>
<dbReference type="FunCoup" id="Q94BY9">
    <property type="interactions" value="659"/>
</dbReference>
<dbReference type="ProteomicsDB" id="177131"/>
<dbReference type="EnsemblPlants" id="AT5G53570.1">
    <property type="protein sequence ID" value="AT5G53570.1"/>
    <property type="gene ID" value="AT5G53570"/>
</dbReference>
<dbReference type="GeneID" id="835439"/>
<dbReference type="Gramene" id="AT5G53570.1">
    <property type="protein sequence ID" value="AT5G53570.1"/>
    <property type="gene ID" value="AT5G53570"/>
</dbReference>
<dbReference type="KEGG" id="ath:AT5G53570"/>
<dbReference type="Araport" id="AT5G53570"/>
<dbReference type="TAIR" id="AT5G53570">
    <property type="gene designation" value="RABGAP22"/>
</dbReference>
<dbReference type="HOGENOM" id="CLU_004457_5_0_1"/>
<dbReference type="InParanoid" id="Q94BY9"/>
<dbReference type="PhylomeDB" id="Q94BY9"/>
<dbReference type="PRO" id="PR:Q94BY9"/>
<dbReference type="Proteomes" id="UP000006548">
    <property type="component" value="Chromosome 5"/>
</dbReference>
<dbReference type="ExpressionAtlas" id="Q94BY9">
    <property type="expression patterns" value="baseline and differential"/>
</dbReference>
<dbReference type="GO" id="GO:0005634">
    <property type="term" value="C:nucleus"/>
    <property type="evidence" value="ECO:0007669"/>
    <property type="project" value="UniProtKB-SubCell"/>
</dbReference>
<dbReference type="GO" id="GO:0005777">
    <property type="term" value="C:peroxisome"/>
    <property type="evidence" value="ECO:0007669"/>
    <property type="project" value="UniProtKB-SubCell"/>
</dbReference>
<dbReference type="GO" id="GO:0005096">
    <property type="term" value="F:GTPase activator activity"/>
    <property type="evidence" value="ECO:0007669"/>
    <property type="project" value="UniProtKB-KW"/>
</dbReference>
<dbReference type="GO" id="GO:0006952">
    <property type="term" value="P:defense response"/>
    <property type="evidence" value="ECO:0007669"/>
    <property type="project" value="UniProtKB-KW"/>
</dbReference>
<dbReference type="FunFam" id="1.10.472.80:FF:000014">
    <property type="entry name" value="GTPase-activating protein gyp7 isoform X1"/>
    <property type="match status" value="1"/>
</dbReference>
<dbReference type="FunFam" id="1.10.8.270:FF:000022">
    <property type="entry name" value="Ypt/Rab-GAP domain of gyp1p superfamily protein"/>
    <property type="match status" value="1"/>
</dbReference>
<dbReference type="Gene3D" id="1.10.8.270">
    <property type="entry name" value="putative rabgap domain of human tbc1 domain family member 14 like domains"/>
    <property type="match status" value="1"/>
</dbReference>
<dbReference type="Gene3D" id="1.10.472.80">
    <property type="entry name" value="Ypt/Rab-GAP domain of gyp1p, domain 3"/>
    <property type="match status" value="1"/>
</dbReference>
<dbReference type="InterPro" id="IPR000195">
    <property type="entry name" value="Rab-GAP-TBC_dom"/>
</dbReference>
<dbReference type="InterPro" id="IPR035969">
    <property type="entry name" value="Rab-GAP_TBC_sf"/>
</dbReference>
<dbReference type="PANTHER" id="PTHR22957:SF688">
    <property type="entry name" value="RAB GTPASE-ACTIVATING PROTEIN 22"/>
    <property type="match status" value="1"/>
</dbReference>
<dbReference type="PANTHER" id="PTHR22957">
    <property type="entry name" value="TBC1 DOMAIN FAMILY MEMBER GTPASE-ACTIVATING PROTEIN"/>
    <property type="match status" value="1"/>
</dbReference>
<dbReference type="Pfam" id="PF00566">
    <property type="entry name" value="RabGAP-TBC"/>
    <property type="match status" value="1"/>
</dbReference>
<dbReference type="SMART" id="SM00164">
    <property type="entry name" value="TBC"/>
    <property type="match status" value="1"/>
</dbReference>
<dbReference type="SUPFAM" id="SSF47923">
    <property type="entry name" value="Ypt/Rab-GAP domain of gyp1p"/>
    <property type="match status" value="2"/>
</dbReference>
<dbReference type="PROSITE" id="PS50086">
    <property type="entry name" value="TBC_RABGAP"/>
    <property type="match status" value="1"/>
</dbReference>
<protein>
    <recommendedName>
        <fullName evidence="4">Rab GTPase-activating protein 22</fullName>
    </recommendedName>
</protein>
<keyword id="KW-0343">GTPase activation</keyword>
<keyword id="KW-0539">Nucleus</keyword>
<keyword id="KW-0576">Peroxisome</keyword>
<keyword id="KW-0611">Plant defense</keyword>
<keyword id="KW-1185">Reference proteome</keyword>
<evidence type="ECO:0000255" key="1">
    <source>
        <dbReference type="PROSITE-ProRule" id="PRU00163"/>
    </source>
</evidence>
<evidence type="ECO:0000256" key="2">
    <source>
        <dbReference type="SAM" id="MobiDB-lite"/>
    </source>
</evidence>
<evidence type="ECO:0000269" key="3">
    <source>
    </source>
</evidence>
<evidence type="ECO:0000303" key="4">
    <source>
    </source>
</evidence>
<evidence type="ECO:0000305" key="5"/>
<evidence type="ECO:0000312" key="6">
    <source>
        <dbReference type="Araport" id="AT5G53570"/>
    </source>
</evidence>
<evidence type="ECO:0000312" key="7">
    <source>
        <dbReference type="EMBL" id="AAK62601.1"/>
    </source>
</evidence>
<evidence type="ECO:0000312" key="8">
    <source>
        <dbReference type="EMBL" id="BAB09733.1"/>
    </source>
</evidence>